<proteinExistence type="inferred from homology"/>
<comment type="function">
    <text evidence="1">Involved in the biosynthesis of the osmoprotectant glycine betaine. Catalyzes the oxidation of choline to betaine aldehyde and betaine aldehyde to glycine betaine at the same rate.</text>
</comment>
<comment type="catalytic activity">
    <reaction evidence="1">
        <text>choline + A = betaine aldehyde + AH2</text>
        <dbReference type="Rhea" id="RHEA:17433"/>
        <dbReference type="ChEBI" id="CHEBI:13193"/>
        <dbReference type="ChEBI" id="CHEBI:15354"/>
        <dbReference type="ChEBI" id="CHEBI:15710"/>
        <dbReference type="ChEBI" id="CHEBI:17499"/>
        <dbReference type="EC" id="1.1.99.1"/>
    </reaction>
</comment>
<comment type="catalytic activity">
    <reaction evidence="1">
        <text>betaine aldehyde + NAD(+) + H2O = glycine betaine + NADH + 2 H(+)</text>
        <dbReference type="Rhea" id="RHEA:15305"/>
        <dbReference type="ChEBI" id="CHEBI:15377"/>
        <dbReference type="ChEBI" id="CHEBI:15378"/>
        <dbReference type="ChEBI" id="CHEBI:15710"/>
        <dbReference type="ChEBI" id="CHEBI:17750"/>
        <dbReference type="ChEBI" id="CHEBI:57540"/>
        <dbReference type="ChEBI" id="CHEBI:57945"/>
        <dbReference type="EC" id="1.2.1.8"/>
    </reaction>
</comment>
<comment type="cofactor">
    <cofactor evidence="1">
        <name>FAD</name>
        <dbReference type="ChEBI" id="CHEBI:57692"/>
    </cofactor>
</comment>
<comment type="pathway">
    <text evidence="1">Amine and polyamine biosynthesis; betaine biosynthesis via choline pathway; betaine aldehyde from choline (cytochrome c reductase route): step 1/1.</text>
</comment>
<comment type="similarity">
    <text evidence="1">Belongs to the GMC oxidoreductase family.</text>
</comment>
<protein>
    <recommendedName>
        <fullName evidence="1">Oxygen-dependent choline dehydrogenase</fullName>
        <shortName evidence="1">CDH</shortName>
        <shortName evidence="1">CHD</shortName>
        <ecNumber evidence="1">1.1.99.1</ecNumber>
    </recommendedName>
    <alternativeName>
        <fullName evidence="1">Betaine aldehyde dehydrogenase</fullName>
        <shortName evidence="1">BADH</shortName>
        <ecNumber evidence="1">1.2.1.8</ecNumber>
    </alternativeName>
</protein>
<feature type="chain" id="PRO_0000205601" description="Oxygen-dependent choline dehydrogenase">
    <location>
        <begin position="1"/>
        <end position="572"/>
    </location>
</feature>
<feature type="active site" description="Proton acceptor" evidence="1">
    <location>
        <position position="477"/>
    </location>
</feature>
<feature type="binding site" evidence="1">
    <location>
        <begin position="9"/>
        <end position="38"/>
    </location>
    <ligand>
        <name>FAD</name>
        <dbReference type="ChEBI" id="CHEBI:57692"/>
    </ligand>
</feature>
<evidence type="ECO:0000255" key="1">
    <source>
        <dbReference type="HAMAP-Rule" id="MF_00750"/>
    </source>
</evidence>
<dbReference type="EC" id="1.1.99.1" evidence="1"/>
<dbReference type="EC" id="1.2.1.8" evidence="1"/>
<dbReference type="EMBL" id="AE015929">
    <property type="protein sequence ID" value="AAO05807.1"/>
    <property type="molecule type" value="Genomic_DNA"/>
</dbReference>
<dbReference type="RefSeq" id="NP_765720.1">
    <property type="nucleotide sequence ID" value="NC_004461.1"/>
</dbReference>
<dbReference type="RefSeq" id="WP_001830593.1">
    <property type="nucleotide sequence ID" value="NZ_WBME01000005.1"/>
</dbReference>
<dbReference type="SMR" id="Q8CMY2"/>
<dbReference type="GeneID" id="50017759"/>
<dbReference type="KEGG" id="sep:SE_2165"/>
<dbReference type="PATRIC" id="fig|176280.10.peg.2115"/>
<dbReference type="eggNOG" id="COG2303">
    <property type="taxonomic scope" value="Bacteria"/>
</dbReference>
<dbReference type="HOGENOM" id="CLU_002865_7_1_9"/>
<dbReference type="OrthoDB" id="9785276at2"/>
<dbReference type="UniPathway" id="UPA00529">
    <property type="reaction ID" value="UER00385"/>
</dbReference>
<dbReference type="Proteomes" id="UP000001411">
    <property type="component" value="Chromosome"/>
</dbReference>
<dbReference type="GO" id="GO:0016020">
    <property type="term" value="C:membrane"/>
    <property type="evidence" value="ECO:0007669"/>
    <property type="project" value="TreeGrafter"/>
</dbReference>
<dbReference type="GO" id="GO:0008802">
    <property type="term" value="F:betaine-aldehyde dehydrogenase (NAD+) activity"/>
    <property type="evidence" value="ECO:0007669"/>
    <property type="project" value="UniProtKB-EC"/>
</dbReference>
<dbReference type="GO" id="GO:0008812">
    <property type="term" value="F:choline dehydrogenase activity"/>
    <property type="evidence" value="ECO:0007669"/>
    <property type="project" value="UniProtKB-UniRule"/>
</dbReference>
<dbReference type="GO" id="GO:0050660">
    <property type="term" value="F:flavin adenine dinucleotide binding"/>
    <property type="evidence" value="ECO:0007669"/>
    <property type="project" value="InterPro"/>
</dbReference>
<dbReference type="GO" id="GO:0019285">
    <property type="term" value="P:glycine betaine biosynthetic process from choline"/>
    <property type="evidence" value="ECO:0007669"/>
    <property type="project" value="UniProtKB-UniRule"/>
</dbReference>
<dbReference type="Gene3D" id="3.50.50.60">
    <property type="entry name" value="FAD/NAD(P)-binding domain"/>
    <property type="match status" value="1"/>
</dbReference>
<dbReference type="Gene3D" id="3.30.560.10">
    <property type="entry name" value="Glucose Oxidase, domain 3"/>
    <property type="match status" value="1"/>
</dbReference>
<dbReference type="HAMAP" id="MF_00750">
    <property type="entry name" value="Choline_dehydrogen"/>
    <property type="match status" value="1"/>
</dbReference>
<dbReference type="InterPro" id="IPR011533">
    <property type="entry name" value="BetA"/>
</dbReference>
<dbReference type="InterPro" id="IPR036188">
    <property type="entry name" value="FAD/NAD-bd_sf"/>
</dbReference>
<dbReference type="InterPro" id="IPR012132">
    <property type="entry name" value="GMC_OxRdtase"/>
</dbReference>
<dbReference type="InterPro" id="IPR000172">
    <property type="entry name" value="GMC_OxRdtase_N"/>
</dbReference>
<dbReference type="InterPro" id="IPR007867">
    <property type="entry name" value="GMC_OxRtase_C"/>
</dbReference>
<dbReference type="NCBIfam" id="TIGR01810">
    <property type="entry name" value="betA"/>
    <property type="match status" value="1"/>
</dbReference>
<dbReference type="NCBIfam" id="NF002550">
    <property type="entry name" value="PRK02106.1"/>
    <property type="match status" value="1"/>
</dbReference>
<dbReference type="PANTHER" id="PTHR11552:SF147">
    <property type="entry name" value="CHOLINE DEHYDROGENASE, MITOCHONDRIAL"/>
    <property type="match status" value="1"/>
</dbReference>
<dbReference type="PANTHER" id="PTHR11552">
    <property type="entry name" value="GLUCOSE-METHANOL-CHOLINE GMC OXIDOREDUCTASE"/>
    <property type="match status" value="1"/>
</dbReference>
<dbReference type="Pfam" id="PF05199">
    <property type="entry name" value="GMC_oxred_C"/>
    <property type="match status" value="1"/>
</dbReference>
<dbReference type="Pfam" id="PF00732">
    <property type="entry name" value="GMC_oxred_N"/>
    <property type="match status" value="1"/>
</dbReference>
<dbReference type="PIRSF" id="PIRSF000137">
    <property type="entry name" value="Alcohol_oxidase"/>
    <property type="match status" value="1"/>
</dbReference>
<dbReference type="SUPFAM" id="SSF54373">
    <property type="entry name" value="FAD-linked reductases, C-terminal domain"/>
    <property type="match status" value="1"/>
</dbReference>
<dbReference type="SUPFAM" id="SSF51905">
    <property type="entry name" value="FAD/NAD(P)-binding domain"/>
    <property type="match status" value="1"/>
</dbReference>
<dbReference type="PROSITE" id="PS00623">
    <property type="entry name" value="GMC_OXRED_1"/>
    <property type="match status" value="1"/>
</dbReference>
<dbReference type="PROSITE" id="PS00624">
    <property type="entry name" value="GMC_OXRED_2"/>
    <property type="match status" value="1"/>
</dbReference>
<reference key="1">
    <citation type="journal article" date="2003" name="Mol. Microbiol.">
        <title>Genome-based analysis of virulence genes in a non-biofilm-forming Staphylococcus epidermidis strain (ATCC 12228).</title>
        <authorList>
            <person name="Zhang Y.-Q."/>
            <person name="Ren S.-X."/>
            <person name="Li H.-L."/>
            <person name="Wang Y.-X."/>
            <person name="Fu G."/>
            <person name="Yang J."/>
            <person name="Qin Z.-Q."/>
            <person name="Miao Y.-G."/>
            <person name="Wang W.-Y."/>
            <person name="Chen R.-S."/>
            <person name="Shen Y."/>
            <person name="Chen Z."/>
            <person name="Yuan Z.-H."/>
            <person name="Zhao G.-P."/>
            <person name="Qu D."/>
            <person name="Danchin A."/>
            <person name="Wen Y.-M."/>
        </authorList>
    </citation>
    <scope>NUCLEOTIDE SEQUENCE [LARGE SCALE GENOMIC DNA]</scope>
    <source>
        <strain>ATCC 12228 / FDA PCI 1200</strain>
    </source>
</reference>
<keyword id="KW-0274">FAD</keyword>
<keyword id="KW-0285">Flavoprotein</keyword>
<keyword id="KW-0520">NAD</keyword>
<keyword id="KW-0560">Oxidoreductase</keyword>
<accession>Q8CMY2</accession>
<name>BETA_STAES</name>
<sequence length="572" mass="64261">MRRKRDSYDYVIIGGGSAGSVLGARLSEDKDKNVLVLEAGRSDYFWDLFIQMPAALMFPSGNRFYDWEYQTDEEPHMGRRVDHARGKVLGGSSSINGMIYQRGNPMDYEGWAEPEGMDTWDFAHCLPYFKKLETTYGAAPYDKVRGHDGPIKLKRGPATNPLFKSFFNAGVEAGYHKTADVNGYRQEGFGPFDSQVHHGRRMSASRAYLRPALRRRNLDVETRAFVTKLIFDENNSKKVTGVTFKKNGKEHTVHANEVILSGGAFNTPQLLQLSGIGDSEFLKSKGIEPRMHLPGVGENFEDHLEVYIQHKCKQPVSLQPSLDVKRMPFIGLQWIFARKGAAASNHFEGGGFVRSNDDVDYPNLMFHFLPIAVRYDGQKAPVAHGYQVHVGPMYSNSRGSLKIKSKDPFEKPSIVFNYLSTKEDEREWVEAIRVARNILKQKAMDPFNGGEISPGPQVQTDEEILDWVRKDGETALHPSCSAKMGPASDPMAVVDPLTMKVHGMENLRVVDASAMPRTTNGNIHAPVLMLAEKAADIIRGRKPLEPQYVDYYKHGIDDEKAGAMEDDPFYQY</sequence>
<gene>
    <name evidence="1" type="primary">betA</name>
    <name type="ordered locus">SE_2165</name>
</gene>
<organism>
    <name type="scientific">Staphylococcus epidermidis (strain ATCC 12228 / FDA PCI 1200)</name>
    <dbReference type="NCBI Taxonomy" id="176280"/>
    <lineage>
        <taxon>Bacteria</taxon>
        <taxon>Bacillati</taxon>
        <taxon>Bacillota</taxon>
        <taxon>Bacilli</taxon>
        <taxon>Bacillales</taxon>
        <taxon>Staphylococcaceae</taxon>
        <taxon>Staphylococcus</taxon>
    </lineage>
</organism>